<reference key="1">
    <citation type="journal article" date="2005" name="Biochem. Biophys. Res. Commun.">
        <title>Novel natriuretic peptides from the venom of the inland taipan (Oxyuranus microlepidotus): isolation, chemical and biological characterisation.</title>
        <authorList>
            <person name="Fry B.G."/>
            <person name="Wickramaratana J.C."/>
            <person name="Lemme S."/>
            <person name="Beuve A."/>
            <person name="Garbers D."/>
            <person name="Hodgson W.C."/>
            <person name="Alewood P.F."/>
        </authorList>
    </citation>
    <scope>PROTEIN SEQUENCE</scope>
    <scope>FUNCTION</scope>
    <scope>SUBCELLULAR LOCATION</scope>
    <scope>TISSUE SPECIFICITY</scope>
    <scope>MASS SPECTROMETRY</scope>
    <scope>DISULFIDE BOND</scope>
    <source>
        <tissue>Venom</tissue>
    </source>
</reference>
<organism>
    <name type="scientific">Oxyuranus scutellatus canni</name>
    <name type="common">Papuan taipan</name>
    <dbReference type="NCBI Taxonomy" id="183720"/>
    <lineage>
        <taxon>Eukaryota</taxon>
        <taxon>Metazoa</taxon>
        <taxon>Chordata</taxon>
        <taxon>Craniata</taxon>
        <taxon>Vertebrata</taxon>
        <taxon>Euteleostomi</taxon>
        <taxon>Lepidosauria</taxon>
        <taxon>Squamata</taxon>
        <taxon>Bifurcata</taxon>
        <taxon>Unidentata</taxon>
        <taxon>Episquamata</taxon>
        <taxon>Toxicofera</taxon>
        <taxon>Serpentes</taxon>
        <taxon>Colubroidea</taxon>
        <taxon>Elapidae</taxon>
        <taxon>Hydrophiinae</taxon>
        <taxon>Oxyuranus</taxon>
    </lineage>
</organism>
<protein>
    <recommendedName>
        <fullName evidence="2">Natriuretic peptide TNP-b</fullName>
    </recommendedName>
    <alternativeName>
        <fullName>Taipan natriuretic peptide</fullName>
    </alternativeName>
    <alternativeName>
        <fullName>Venom natriuretic peptide OxsSNPb</fullName>
    </alternativeName>
</protein>
<dbReference type="SMR" id="P83229"/>
<dbReference type="GO" id="GO:0005576">
    <property type="term" value="C:extracellular region"/>
    <property type="evidence" value="ECO:0007669"/>
    <property type="project" value="UniProtKB-SubCell"/>
</dbReference>
<dbReference type="GO" id="GO:0005179">
    <property type="term" value="F:hormone activity"/>
    <property type="evidence" value="ECO:0007669"/>
    <property type="project" value="InterPro"/>
</dbReference>
<dbReference type="GO" id="GO:0090729">
    <property type="term" value="F:toxin activity"/>
    <property type="evidence" value="ECO:0007669"/>
    <property type="project" value="UniProtKB-KW"/>
</dbReference>
<dbReference type="GO" id="GO:0008217">
    <property type="term" value="P:regulation of blood pressure"/>
    <property type="evidence" value="ECO:0007669"/>
    <property type="project" value="UniProtKB-KW"/>
</dbReference>
<dbReference type="GO" id="GO:0042311">
    <property type="term" value="P:vasodilation"/>
    <property type="evidence" value="ECO:0007669"/>
    <property type="project" value="UniProtKB-KW"/>
</dbReference>
<dbReference type="InterPro" id="IPR000663">
    <property type="entry name" value="Natr_peptide"/>
</dbReference>
<dbReference type="InterPro" id="IPR030480">
    <property type="entry name" value="Natr_peptide_CS"/>
</dbReference>
<dbReference type="Pfam" id="PF00212">
    <property type="entry name" value="ANP"/>
    <property type="match status" value="1"/>
</dbReference>
<dbReference type="SMART" id="SM00183">
    <property type="entry name" value="NAT_PEP"/>
    <property type="match status" value="1"/>
</dbReference>
<dbReference type="PROSITE" id="PS00263">
    <property type="entry name" value="NATRIURETIC_PEPTIDE"/>
    <property type="match status" value="1"/>
</dbReference>
<sequence>SDPKIGDGCFGLPLDHIGSVSGLGCNRPVQNRPKK</sequence>
<evidence type="ECO:0000269" key="1">
    <source>
    </source>
</evidence>
<evidence type="ECO:0000303" key="2">
    <source>
    </source>
</evidence>
<evidence type="ECO:0000305" key="3"/>
<evidence type="ECO:0000305" key="4">
    <source>
    </source>
</evidence>
<comment type="function">
    <text evidence="1">Snake venom natriuretic peptide that exhibits vasoactive and probable hypotensive activity (PubMed:15652496). Is only weakly active on natriuretic peptide receptor-C (NPR3) (PubMed:15652496).</text>
</comment>
<comment type="subcellular location">
    <subcellularLocation>
        <location evidence="1">Secreted</location>
    </subcellularLocation>
</comment>
<comment type="tissue specificity">
    <text evidence="1">Expressed by the venom gland.</text>
</comment>
<comment type="mass spectrometry"/>
<comment type="miscellaneous">
    <text evidence="4">Negative results: does not activate natriuretic peptide receptor-A (NPR1).</text>
</comment>
<comment type="similarity">
    <text evidence="3">Belongs to the natriuretic peptide family.</text>
</comment>
<accession>P83229</accession>
<name>VNPB_OXYSA</name>
<feature type="peptide" id="PRO_0000045074" description="Natriuretic peptide TNP-b" evidence="1">
    <location>
        <begin position="1"/>
        <end position="35"/>
    </location>
</feature>
<feature type="disulfide bond" evidence="1">
    <location>
        <begin position="9"/>
        <end position="25"/>
    </location>
</feature>
<proteinExistence type="evidence at protein level"/>
<keyword id="KW-0903">Direct protein sequencing</keyword>
<keyword id="KW-1015">Disulfide bond</keyword>
<keyword id="KW-0382">Hypotensive agent</keyword>
<keyword id="KW-0964">Secreted</keyword>
<keyword id="KW-0800">Toxin</keyword>
<keyword id="KW-0838">Vasoactive</keyword>
<keyword id="KW-0840">Vasodilator</keyword>